<organism>
    <name type="scientific">Escherichia coli O157:H7</name>
    <dbReference type="NCBI Taxonomy" id="83334"/>
    <lineage>
        <taxon>Bacteria</taxon>
        <taxon>Pseudomonadati</taxon>
        <taxon>Pseudomonadota</taxon>
        <taxon>Gammaproteobacteria</taxon>
        <taxon>Enterobacterales</taxon>
        <taxon>Enterobacteriaceae</taxon>
        <taxon>Escherichia</taxon>
    </lineage>
</organism>
<keyword id="KW-0963">Cytoplasm</keyword>
<keyword id="KW-0255">Endonuclease</keyword>
<keyword id="KW-0378">Hydrolase</keyword>
<keyword id="KW-0460">Magnesium</keyword>
<keyword id="KW-0479">Metal-binding</keyword>
<keyword id="KW-0540">Nuclease</keyword>
<keyword id="KW-1185">Reference proteome</keyword>
<sequence length="155" mass="17597">MLKQVEIFTDGSCLGNPGPGGYGAILRYRGREKTFSAGYTRTTNNRMELMAAIVALEALKEHCEVILSTDSQYVRQGITQWIHNWKKRGWKTADKKPVKNVDLWQRLDAALGQHQIKWEWVKGHAGHPENERCDELARAAAMNPTLEDTGYQVEV</sequence>
<feature type="chain" id="PRO_0000195373" description="Ribonuclease HI">
    <location>
        <begin position="1"/>
        <end position="155"/>
    </location>
</feature>
<feature type="domain" description="RNase H type-1" evidence="2">
    <location>
        <begin position="1"/>
        <end position="142"/>
    </location>
</feature>
<feature type="binding site" evidence="1">
    <location>
        <position position="10"/>
    </location>
    <ligand>
        <name>Mg(2+)</name>
        <dbReference type="ChEBI" id="CHEBI:18420"/>
        <label>1</label>
    </ligand>
</feature>
<feature type="binding site" evidence="1">
    <location>
        <position position="10"/>
    </location>
    <ligand>
        <name>Mg(2+)</name>
        <dbReference type="ChEBI" id="CHEBI:18420"/>
        <label>2</label>
    </ligand>
</feature>
<feature type="binding site" evidence="1">
    <location>
        <position position="48"/>
    </location>
    <ligand>
        <name>Mg(2+)</name>
        <dbReference type="ChEBI" id="CHEBI:18420"/>
        <label>1</label>
    </ligand>
</feature>
<feature type="binding site" evidence="1">
    <location>
        <position position="70"/>
    </location>
    <ligand>
        <name>Mg(2+)</name>
        <dbReference type="ChEBI" id="CHEBI:18420"/>
        <label>1</label>
    </ligand>
</feature>
<feature type="binding site" evidence="1">
    <location>
        <position position="134"/>
    </location>
    <ligand>
        <name>Mg(2+)</name>
        <dbReference type="ChEBI" id="CHEBI:18420"/>
        <label>2</label>
    </ligand>
</feature>
<protein>
    <recommendedName>
        <fullName>Ribonuclease HI</fullName>
        <shortName>RNase HI</shortName>
        <ecNumber>3.1.26.4</ecNumber>
    </recommendedName>
</protein>
<evidence type="ECO:0000250" key="1"/>
<evidence type="ECO:0000255" key="2">
    <source>
        <dbReference type="PROSITE-ProRule" id="PRU00408"/>
    </source>
</evidence>
<evidence type="ECO:0000305" key="3"/>
<accession>P0A7Y6</accession>
<accession>P00647</accession>
<accession>Q8FKY5</accession>
<proteinExistence type="inferred from homology"/>
<reference key="1">
    <citation type="journal article" date="2001" name="Nature">
        <title>Genome sequence of enterohaemorrhagic Escherichia coli O157:H7.</title>
        <authorList>
            <person name="Perna N.T."/>
            <person name="Plunkett G. III"/>
            <person name="Burland V."/>
            <person name="Mau B."/>
            <person name="Glasner J.D."/>
            <person name="Rose D.J."/>
            <person name="Mayhew G.F."/>
            <person name="Evans P.S."/>
            <person name="Gregor J."/>
            <person name="Kirkpatrick H.A."/>
            <person name="Posfai G."/>
            <person name="Hackett J."/>
            <person name="Klink S."/>
            <person name="Boutin A."/>
            <person name="Shao Y."/>
            <person name="Miller L."/>
            <person name="Grotbeck E.J."/>
            <person name="Davis N.W."/>
            <person name="Lim A."/>
            <person name="Dimalanta E.T."/>
            <person name="Potamousis K."/>
            <person name="Apodaca J."/>
            <person name="Anantharaman T.S."/>
            <person name="Lin J."/>
            <person name="Yen G."/>
            <person name="Schwartz D.C."/>
            <person name="Welch R.A."/>
            <person name="Blattner F.R."/>
        </authorList>
    </citation>
    <scope>NUCLEOTIDE SEQUENCE [LARGE SCALE GENOMIC DNA]</scope>
    <source>
        <strain>O157:H7 / EDL933 / ATCC 700927 / EHEC</strain>
    </source>
</reference>
<reference key="2">
    <citation type="journal article" date="2001" name="DNA Res.">
        <title>Complete genome sequence of enterohemorrhagic Escherichia coli O157:H7 and genomic comparison with a laboratory strain K-12.</title>
        <authorList>
            <person name="Hayashi T."/>
            <person name="Makino K."/>
            <person name="Ohnishi M."/>
            <person name="Kurokawa K."/>
            <person name="Ishii K."/>
            <person name="Yokoyama K."/>
            <person name="Han C.-G."/>
            <person name="Ohtsubo E."/>
            <person name="Nakayama K."/>
            <person name="Murata T."/>
            <person name="Tanaka M."/>
            <person name="Tobe T."/>
            <person name="Iida T."/>
            <person name="Takami H."/>
            <person name="Honda T."/>
            <person name="Sasakawa C."/>
            <person name="Ogasawara N."/>
            <person name="Yasunaga T."/>
            <person name="Kuhara S."/>
            <person name="Shiba T."/>
            <person name="Hattori M."/>
            <person name="Shinagawa H."/>
        </authorList>
    </citation>
    <scope>NUCLEOTIDE SEQUENCE [LARGE SCALE GENOMIC DNA]</scope>
    <source>
        <strain>O157:H7 / Sakai / RIMD 0509952 / EHEC</strain>
    </source>
</reference>
<dbReference type="EC" id="3.1.26.4"/>
<dbReference type="EMBL" id="AE005174">
    <property type="protein sequence ID" value="AAG54510.1"/>
    <property type="molecule type" value="Genomic_DNA"/>
</dbReference>
<dbReference type="EMBL" id="BA000007">
    <property type="protein sequence ID" value="BAB33633.1"/>
    <property type="molecule type" value="Genomic_DNA"/>
</dbReference>
<dbReference type="PIR" id="B85506">
    <property type="entry name" value="B85506"/>
</dbReference>
<dbReference type="PIR" id="B90655">
    <property type="entry name" value="B90655"/>
</dbReference>
<dbReference type="RefSeq" id="NP_308237.1">
    <property type="nucleotide sequence ID" value="NC_002695.1"/>
</dbReference>
<dbReference type="RefSeq" id="WP_000917883.1">
    <property type="nucleotide sequence ID" value="NZ_VOAI01000020.1"/>
</dbReference>
<dbReference type="SMR" id="P0A7Y6"/>
<dbReference type="STRING" id="155864.Z0239"/>
<dbReference type="GeneID" id="914053"/>
<dbReference type="GeneID" id="93777209"/>
<dbReference type="KEGG" id="ece:Z0239"/>
<dbReference type="KEGG" id="ecs:ECs_0210"/>
<dbReference type="PATRIC" id="fig|386585.9.peg.314"/>
<dbReference type="eggNOG" id="COG0328">
    <property type="taxonomic scope" value="Bacteria"/>
</dbReference>
<dbReference type="HOGENOM" id="CLU_030894_6_0_6"/>
<dbReference type="OMA" id="MQEIEIF"/>
<dbReference type="Proteomes" id="UP000000558">
    <property type="component" value="Chromosome"/>
</dbReference>
<dbReference type="Proteomes" id="UP000002519">
    <property type="component" value="Chromosome"/>
</dbReference>
<dbReference type="GO" id="GO:0005737">
    <property type="term" value="C:cytoplasm"/>
    <property type="evidence" value="ECO:0007669"/>
    <property type="project" value="UniProtKB-SubCell"/>
</dbReference>
<dbReference type="GO" id="GO:0000287">
    <property type="term" value="F:magnesium ion binding"/>
    <property type="evidence" value="ECO:0007669"/>
    <property type="project" value="UniProtKB-UniRule"/>
</dbReference>
<dbReference type="GO" id="GO:0003676">
    <property type="term" value="F:nucleic acid binding"/>
    <property type="evidence" value="ECO:0007669"/>
    <property type="project" value="InterPro"/>
</dbReference>
<dbReference type="GO" id="GO:0004523">
    <property type="term" value="F:RNA-DNA hybrid ribonuclease activity"/>
    <property type="evidence" value="ECO:0007669"/>
    <property type="project" value="UniProtKB-UniRule"/>
</dbReference>
<dbReference type="GO" id="GO:0043137">
    <property type="term" value="P:DNA replication, removal of RNA primer"/>
    <property type="evidence" value="ECO:0007669"/>
    <property type="project" value="TreeGrafter"/>
</dbReference>
<dbReference type="CDD" id="cd09278">
    <property type="entry name" value="RNase_HI_prokaryote_like"/>
    <property type="match status" value="1"/>
</dbReference>
<dbReference type="FunFam" id="3.30.420.10:FF:000008">
    <property type="entry name" value="Ribonuclease H"/>
    <property type="match status" value="1"/>
</dbReference>
<dbReference type="Gene3D" id="3.30.420.10">
    <property type="entry name" value="Ribonuclease H-like superfamily/Ribonuclease H"/>
    <property type="match status" value="1"/>
</dbReference>
<dbReference type="HAMAP" id="MF_00042">
    <property type="entry name" value="RNase_H"/>
    <property type="match status" value="1"/>
</dbReference>
<dbReference type="InterPro" id="IPR050092">
    <property type="entry name" value="RNase_H"/>
</dbReference>
<dbReference type="InterPro" id="IPR012337">
    <property type="entry name" value="RNaseH-like_sf"/>
</dbReference>
<dbReference type="InterPro" id="IPR002156">
    <property type="entry name" value="RNaseH_domain"/>
</dbReference>
<dbReference type="InterPro" id="IPR036397">
    <property type="entry name" value="RNaseH_sf"/>
</dbReference>
<dbReference type="InterPro" id="IPR022892">
    <property type="entry name" value="RNaseHI"/>
</dbReference>
<dbReference type="NCBIfam" id="NF001236">
    <property type="entry name" value="PRK00203.1"/>
    <property type="match status" value="1"/>
</dbReference>
<dbReference type="PANTHER" id="PTHR10642">
    <property type="entry name" value="RIBONUCLEASE H1"/>
    <property type="match status" value="1"/>
</dbReference>
<dbReference type="PANTHER" id="PTHR10642:SF26">
    <property type="entry name" value="RIBONUCLEASE H1"/>
    <property type="match status" value="1"/>
</dbReference>
<dbReference type="Pfam" id="PF00075">
    <property type="entry name" value="RNase_H"/>
    <property type="match status" value="1"/>
</dbReference>
<dbReference type="SUPFAM" id="SSF53098">
    <property type="entry name" value="Ribonuclease H-like"/>
    <property type="match status" value="1"/>
</dbReference>
<dbReference type="PROSITE" id="PS50879">
    <property type="entry name" value="RNASE_H_1"/>
    <property type="match status" value="1"/>
</dbReference>
<comment type="function">
    <text evidence="1">Endonuclease that specifically degrades the RNA of RNA-DNA hybrids.</text>
</comment>
<comment type="catalytic activity">
    <reaction>
        <text>Endonucleolytic cleavage to 5'-phosphomonoester.</text>
        <dbReference type="EC" id="3.1.26.4"/>
    </reaction>
</comment>
<comment type="cofactor">
    <cofactor evidence="1">
        <name>Mg(2+)</name>
        <dbReference type="ChEBI" id="CHEBI:18420"/>
    </cofactor>
    <text evidence="1">Binds 1 Mg(2+) ion per subunit. May bind a second metal ion at a regulatory site, or after substrate binding.</text>
</comment>
<comment type="subunit">
    <text evidence="1">Monomer.</text>
</comment>
<comment type="subcellular location">
    <subcellularLocation>
        <location evidence="3">Cytoplasm</location>
    </subcellularLocation>
</comment>
<comment type="similarity">
    <text evidence="3">Belongs to the RNase H family.</text>
</comment>
<name>RNH_ECO57</name>
<gene>
    <name type="primary">rnhA</name>
    <name type="ordered locus">Z0239</name>
    <name type="ordered locus">ECs0210</name>
</gene>